<reference key="1">
    <citation type="journal article" date="2002" name="DNA Res.">
        <title>Complete genomic sequence of nitrogen-fixing symbiotic bacterium Bradyrhizobium japonicum USDA110.</title>
        <authorList>
            <person name="Kaneko T."/>
            <person name="Nakamura Y."/>
            <person name="Sato S."/>
            <person name="Minamisawa K."/>
            <person name="Uchiumi T."/>
            <person name="Sasamoto S."/>
            <person name="Watanabe A."/>
            <person name="Idesawa K."/>
            <person name="Iriguchi M."/>
            <person name="Kawashima K."/>
            <person name="Kohara M."/>
            <person name="Matsumoto M."/>
            <person name="Shimpo S."/>
            <person name="Tsuruoka H."/>
            <person name="Wada T."/>
            <person name="Yamada M."/>
            <person name="Tabata S."/>
        </authorList>
    </citation>
    <scope>NUCLEOTIDE SEQUENCE [LARGE SCALE GENOMIC DNA]</scope>
    <source>
        <strain>JCM 10833 / BCRC 13528 / IAM 13628 / NBRC 14792 / USDA 110</strain>
    </source>
</reference>
<comment type="function">
    <text evidence="1">Catalyzes the formation of the alpha-1,6-glucosidic linkages in glycogen by scission of a 1,4-alpha-linked oligosaccharide from growing alpha-1,4-glucan chains and the subsequent attachment of the oligosaccharide to the alpha-1,6 position.</text>
</comment>
<comment type="catalytic activity">
    <reaction evidence="1">
        <text>Transfers a segment of a (1-&gt;4)-alpha-D-glucan chain to a primary hydroxy group in a similar glucan chain.</text>
        <dbReference type="EC" id="2.4.1.18"/>
    </reaction>
</comment>
<comment type="pathway">
    <text evidence="1">Glycan biosynthesis; glycogen biosynthesis.</text>
</comment>
<comment type="subunit">
    <text evidence="1">Monomer.</text>
</comment>
<comment type="similarity">
    <text evidence="1">Belongs to the glycosyl hydrolase 13 family. GlgB subfamily.</text>
</comment>
<dbReference type="EC" id="2.4.1.18" evidence="1"/>
<dbReference type="EMBL" id="BA000040">
    <property type="protein sequence ID" value="BAC52033.1"/>
    <property type="molecule type" value="Genomic_DNA"/>
</dbReference>
<dbReference type="RefSeq" id="NP_773408.1">
    <property type="nucleotide sequence ID" value="NC_004463.1"/>
</dbReference>
<dbReference type="SMR" id="Q89FD3"/>
<dbReference type="FunCoup" id="Q89FD3">
    <property type="interactions" value="601"/>
</dbReference>
<dbReference type="STRING" id="224911.AAV28_31440"/>
<dbReference type="CAZy" id="CBM48">
    <property type="family name" value="Carbohydrate-Binding Module Family 48"/>
</dbReference>
<dbReference type="CAZy" id="GH13">
    <property type="family name" value="Glycoside Hydrolase Family 13"/>
</dbReference>
<dbReference type="EnsemblBacteria" id="BAC52033">
    <property type="protein sequence ID" value="BAC52033"/>
    <property type="gene ID" value="BAC52033"/>
</dbReference>
<dbReference type="KEGG" id="bja:blr6768"/>
<dbReference type="PATRIC" id="fig|224911.5.peg.6935"/>
<dbReference type="eggNOG" id="COG0296">
    <property type="taxonomic scope" value="Bacteria"/>
</dbReference>
<dbReference type="HOGENOM" id="CLU_004245_3_2_5"/>
<dbReference type="InParanoid" id="Q89FD3"/>
<dbReference type="OrthoDB" id="9800174at2"/>
<dbReference type="PhylomeDB" id="Q89FD3"/>
<dbReference type="UniPathway" id="UPA00164"/>
<dbReference type="Proteomes" id="UP000002526">
    <property type="component" value="Chromosome"/>
</dbReference>
<dbReference type="GO" id="GO:0005737">
    <property type="term" value="C:cytoplasm"/>
    <property type="evidence" value="ECO:0000318"/>
    <property type="project" value="GO_Central"/>
</dbReference>
<dbReference type="GO" id="GO:0005829">
    <property type="term" value="C:cytosol"/>
    <property type="evidence" value="ECO:0000318"/>
    <property type="project" value="GO_Central"/>
</dbReference>
<dbReference type="GO" id="GO:0003844">
    <property type="term" value="F:1,4-alpha-glucan branching enzyme activity"/>
    <property type="evidence" value="ECO:0000318"/>
    <property type="project" value="GO_Central"/>
</dbReference>
<dbReference type="GO" id="GO:0043169">
    <property type="term" value="F:cation binding"/>
    <property type="evidence" value="ECO:0007669"/>
    <property type="project" value="InterPro"/>
</dbReference>
<dbReference type="GO" id="GO:0004553">
    <property type="term" value="F:hydrolase activity, hydrolyzing O-glycosyl compounds"/>
    <property type="evidence" value="ECO:0007669"/>
    <property type="project" value="InterPro"/>
</dbReference>
<dbReference type="GO" id="GO:0005978">
    <property type="term" value="P:glycogen biosynthetic process"/>
    <property type="evidence" value="ECO:0000318"/>
    <property type="project" value="GO_Central"/>
</dbReference>
<dbReference type="CDD" id="cd11322">
    <property type="entry name" value="AmyAc_Glg_BE"/>
    <property type="match status" value="1"/>
</dbReference>
<dbReference type="CDD" id="cd02855">
    <property type="entry name" value="E_set_GBE_prok_N"/>
    <property type="match status" value="1"/>
</dbReference>
<dbReference type="FunFam" id="2.60.40.10:FF:000169">
    <property type="entry name" value="1,4-alpha-glucan branching enzyme GlgB"/>
    <property type="match status" value="1"/>
</dbReference>
<dbReference type="FunFam" id="2.60.40.1180:FF:000002">
    <property type="entry name" value="1,4-alpha-glucan branching enzyme GlgB"/>
    <property type="match status" value="1"/>
</dbReference>
<dbReference type="FunFam" id="3.20.20.80:FF:000003">
    <property type="entry name" value="1,4-alpha-glucan branching enzyme GlgB"/>
    <property type="match status" value="1"/>
</dbReference>
<dbReference type="Gene3D" id="3.20.20.80">
    <property type="entry name" value="Glycosidases"/>
    <property type="match status" value="1"/>
</dbReference>
<dbReference type="Gene3D" id="2.60.40.1180">
    <property type="entry name" value="Golgi alpha-mannosidase II"/>
    <property type="match status" value="1"/>
</dbReference>
<dbReference type="Gene3D" id="2.60.40.10">
    <property type="entry name" value="Immunoglobulins"/>
    <property type="match status" value="1"/>
</dbReference>
<dbReference type="HAMAP" id="MF_00685">
    <property type="entry name" value="GlgB"/>
    <property type="match status" value="1"/>
</dbReference>
<dbReference type="InterPro" id="IPR006048">
    <property type="entry name" value="A-amylase/branching_C"/>
</dbReference>
<dbReference type="InterPro" id="IPR037439">
    <property type="entry name" value="Branching_enzy"/>
</dbReference>
<dbReference type="InterPro" id="IPR006407">
    <property type="entry name" value="GlgB"/>
</dbReference>
<dbReference type="InterPro" id="IPR054169">
    <property type="entry name" value="GlgB_N"/>
</dbReference>
<dbReference type="InterPro" id="IPR044143">
    <property type="entry name" value="GlgB_N_E_set_prok"/>
</dbReference>
<dbReference type="InterPro" id="IPR006047">
    <property type="entry name" value="Glyco_hydro_13_cat_dom"/>
</dbReference>
<dbReference type="InterPro" id="IPR004193">
    <property type="entry name" value="Glyco_hydro_13_N"/>
</dbReference>
<dbReference type="InterPro" id="IPR013780">
    <property type="entry name" value="Glyco_hydro_b"/>
</dbReference>
<dbReference type="InterPro" id="IPR017853">
    <property type="entry name" value="Glycoside_hydrolase_SF"/>
</dbReference>
<dbReference type="InterPro" id="IPR013783">
    <property type="entry name" value="Ig-like_fold"/>
</dbReference>
<dbReference type="InterPro" id="IPR014756">
    <property type="entry name" value="Ig_E-set"/>
</dbReference>
<dbReference type="NCBIfam" id="TIGR01515">
    <property type="entry name" value="branching_enzym"/>
    <property type="match status" value="1"/>
</dbReference>
<dbReference type="NCBIfam" id="NF003811">
    <property type="entry name" value="PRK05402.1"/>
    <property type="match status" value="1"/>
</dbReference>
<dbReference type="NCBIfam" id="NF008967">
    <property type="entry name" value="PRK12313.1"/>
    <property type="match status" value="1"/>
</dbReference>
<dbReference type="PANTHER" id="PTHR43651">
    <property type="entry name" value="1,4-ALPHA-GLUCAN-BRANCHING ENZYME"/>
    <property type="match status" value="1"/>
</dbReference>
<dbReference type="PANTHER" id="PTHR43651:SF3">
    <property type="entry name" value="1,4-ALPHA-GLUCAN-BRANCHING ENZYME"/>
    <property type="match status" value="1"/>
</dbReference>
<dbReference type="Pfam" id="PF00128">
    <property type="entry name" value="Alpha-amylase"/>
    <property type="match status" value="1"/>
</dbReference>
<dbReference type="Pfam" id="PF02806">
    <property type="entry name" value="Alpha-amylase_C"/>
    <property type="match status" value="1"/>
</dbReference>
<dbReference type="Pfam" id="PF02922">
    <property type="entry name" value="CBM_48"/>
    <property type="match status" value="1"/>
</dbReference>
<dbReference type="Pfam" id="PF22019">
    <property type="entry name" value="GlgB_N"/>
    <property type="match status" value="1"/>
</dbReference>
<dbReference type="PIRSF" id="PIRSF000463">
    <property type="entry name" value="GlgB"/>
    <property type="match status" value="1"/>
</dbReference>
<dbReference type="SMART" id="SM00642">
    <property type="entry name" value="Aamy"/>
    <property type="match status" value="1"/>
</dbReference>
<dbReference type="SUPFAM" id="SSF51445">
    <property type="entry name" value="(Trans)glycosidases"/>
    <property type="match status" value="1"/>
</dbReference>
<dbReference type="SUPFAM" id="SSF81296">
    <property type="entry name" value="E set domains"/>
    <property type="match status" value="1"/>
</dbReference>
<dbReference type="SUPFAM" id="SSF51011">
    <property type="entry name" value="Glycosyl hydrolase domain"/>
    <property type="match status" value="1"/>
</dbReference>
<gene>
    <name evidence="1" type="primary">glgB</name>
    <name type="ordered locus">blr6768</name>
</gene>
<organism>
    <name type="scientific">Bradyrhizobium diazoefficiens (strain JCM 10833 / BCRC 13528 / IAM 13628 / NBRC 14792 / USDA 110)</name>
    <dbReference type="NCBI Taxonomy" id="224911"/>
    <lineage>
        <taxon>Bacteria</taxon>
        <taxon>Pseudomonadati</taxon>
        <taxon>Pseudomonadota</taxon>
        <taxon>Alphaproteobacteria</taxon>
        <taxon>Hyphomicrobiales</taxon>
        <taxon>Nitrobacteraceae</taxon>
        <taxon>Bradyrhizobium</taxon>
    </lineage>
</organism>
<keyword id="KW-0119">Carbohydrate metabolism</keyword>
<keyword id="KW-0320">Glycogen biosynthesis</keyword>
<keyword id="KW-0321">Glycogen metabolism</keyword>
<keyword id="KW-0328">Glycosyltransferase</keyword>
<keyword id="KW-1185">Reference proteome</keyword>
<keyword id="KW-0808">Transferase</keyword>
<name>GLGB_BRADU</name>
<evidence type="ECO:0000255" key="1">
    <source>
        <dbReference type="HAMAP-Rule" id="MF_00685"/>
    </source>
</evidence>
<sequence>MPRAKPMPKLPAEAYAIIEGRHADPFHYLGLHPEGGKSVVRAFLPEASNVEAVGEHGEVARLDRVHDAGLFVGALPNGSKHYQLRAKFGDSIVEFEDAYRFPPILTDFDLYLLGEGTHQRLYDKLGAHPMTLDGVDGIGFVVLAPNARRVSVVGDFNFWDSRRHPMRVRGSGYWELFIPHAKRGDHYKFDIVGPHGHQLPLKSDPMAFASEVRPKTASIVFDEAHLPRPRPAPDGINALSAPMSIYEVHLGSWRRKGDNEWLTYRELAEQLPAYARDMGFTHLEFLPVSEHPFDGSWGYQPTGLYAPTSRFGTPEDFAALVDACHREGVGVLLDWVPGHFPDDPHGLGSFDGTSLYEHANPLQGRHLDWGTLIYNYGRTEVTNFLVSNALFWLERYAIDGLRVDAVASMLYLDYSRPPGAWIPNQYGGRENIEAIAFLRRFNTELFARFPQATTAAEESTAWPQVSRPVEFGGLGFGYKWNMGWMHDTLNYISKDPIHRKHHHGEILFGLHYAFSENFILPLSHDEVVHGKRSILGRMPGDEWQRFANLRAYYSFMFGHPGKKLLFMGAEIAQSREWNHDQSLDWHLLEYKYHSGIQALIRDLNRLYRAVPALHQMDCDQAGFEWLITDDANRNVFAWLRKGLDEHARCLVIVNFSPNVYRNYRVRVPFAGKWKEVLNSDSAHYGGSNVGNIGEVHAVDGKTPELRLTIPPLAAIFLVPES</sequence>
<protein>
    <recommendedName>
        <fullName evidence="1">1,4-alpha-glucan branching enzyme GlgB</fullName>
        <ecNumber evidence="1">2.4.1.18</ecNumber>
    </recommendedName>
    <alternativeName>
        <fullName evidence="1">1,4-alpha-D-glucan:1,4-alpha-D-glucan 6-glucosyl-transferase</fullName>
    </alternativeName>
    <alternativeName>
        <fullName evidence="1">Alpha-(1-&gt;4)-glucan branching enzyme</fullName>
    </alternativeName>
    <alternativeName>
        <fullName evidence="1">Glycogen branching enzyme</fullName>
        <shortName evidence="1">BE</shortName>
    </alternativeName>
</protein>
<feature type="chain" id="PRO_0000188688" description="1,4-alpha-glucan branching enzyme GlgB">
    <location>
        <begin position="1"/>
        <end position="721"/>
    </location>
</feature>
<feature type="active site" description="Nucleophile" evidence="1">
    <location>
        <position position="404"/>
    </location>
</feature>
<feature type="active site" description="Proton donor" evidence="1">
    <location>
        <position position="457"/>
    </location>
</feature>
<proteinExistence type="inferred from homology"/>
<accession>Q89FD3</accession>